<evidence type="ECO:0000255" key="1">
    <source>
        <dbReference type="HAMAP-Rule" id="MF_00380"/>
    </source>
</evidence>
<evidence type="ECO:0000256" key="2">
    <source>
        <dbReference type="SAM" id="MobiDB-lite"/>
    </source>
</evidence>
<accession>A0KKP3</accession>
<dbReference type="EMBL" id="CP000462">
    <property type="protein sequence ID" value="ABK36657.1"/>
    <property type="molecule type" value="Genomic_DNA"/>
</dbReference>
<dbReference type="RefSeq" id="WP_005300715.1">
    <property type="nucleotide sequence ID" value="NC_008570.1"/>
</dbReference>
<dbReference type="RefSeq" id="YP_856844.1">
    <property type="nucleotide sequence ID" value="NC_008570.1"/>
</dbReference>
<dbReference type="SMR" id="A0KKP3"/>
<dbReference type="STRING" id="380703.AHA_2321"/>
<dbReference type="EnsemblBacteria" id="ABK36657">
    <property type="protein sequence ID" value="ABK36657"/>
    <property type="gene ID" value="AHA_2321"/>
</dbReference>
<dbReference type="GeneID" id="97855733"/>
<dbReference type="KEGG" id="aha:AHA_2321"/>
<dbReference type="PATRIC" id="fig|380703.7.peg.2322"/>
<dbReference type="eggNOG" id="COG0776">
    <property type="taxonomic scope" value="Bacteria"/>
</dbReference>
<dbReference type="HOGENOM" id="CLU_105066_1_3_6"/>
<dbReference type="OrthoDB" id="9797747at2"/>
<dbReference type="PRO" id="PR:A0KKP3"/>
<dbReference type="Proteomes" id="UP000000756">
    <property type="component" value="Chromosome"/>
</dbReference>
<dbReference type="GO" id="GO:0005829">
    <property type="term" value="C:cytosol"/>
    <property type="evidence" value="ECO:0007669"/>
    <property type="project" value="TreeGrafter"/>
</dbReference>
<dbReference type="GO" id="GO:0003677">
    <property type="term" value="F:DNA binding"/>
    <property type="evidence" value="ECO:0007669"/>
    <property type="project" value="UniProtKB-UniRule"/>
</dbReference>
<dbReference type="GO" id="GO:0030527">
    <property type="term" value="F:structural constituent of chromatin"/>
    <property type="evidence" value="ECO:0007669"/>
    <property type="project" value="InterPro"/>
</dbReference>
<dbReference type="GO" id="GO:0006310">
    <property type="term" value="P:DNA recombination"/>
    <property type="evidence" value="ECO:0007669"/>
    <property type="project" value="UniProtKB-UniRule"/>
</dbReference>
<dbReference type="GO" id="GO:0009893">
    <property type="term" value="P:positive regulation of metabolic process"/>
    <property type="evidence" value="ECO:0007669"/>
    <property type="project" value="UniProtKB-ARBA"/>
</dbReference>
<dbReference type="GO" id="GO:0006355">
    <property type="term" value="P:regulation of DNA-templated transcription"/>
    <property type="evidence" value="ECO:0007669"/>
    <property type="project" value="UniProtKB-UniRule"/>
</dbReference>
<dbReference type="GO" id="GO:0006417">
    <property type="term" value="P:regulation of translation"/>
    <property type="evidence" value="ECO:0007669"/>
    <property type="project" value="UniProtKB-UniRule"/>
</dbReference>
<dbReference type="CDD" id="cd13835">
    <property type="entry name" value="IHF_A"/>
    <property type="match status" value="1"/>
</dbReference>
<dbReference type="FunFam" id="4.10.520.10:FF:000002">
    <property type="entry name" value="Integration host factor subunit alpha"/>
    <property type="match status" value="1"/>
</dbReference>
<dbReference type="Gene3D" id="4.10.520.10">
    <property type="entry name" value="IHF-like DNA-binding proteins"/>
    <property type="match status" value="1"/>
</dbReference>
<dbReference type="HAMAP" id="MF_00380">
    <property type="entry name" value="IHF_alpha"/>
    <property type="match status" value="1"/>
</dbReference>
<dbReference type="InterPro" id="IPR000119">
    <property type="entry name" value="Hist_DNA-bd"/>
</dbReference>
<dbReference type="InterPro" id="IPR020816">
    <property type="entry name" value="Histone-like_DNA-bd_CS"/>
</dbReference>
<dbReference type="InterPro" id="IPR010992">
    <property type="entry name" value="IHF-like_DNA-bd_dom_sf"/>
</dbReference>
<dbReference type="InterPro" id="IPR005684">
    <property type="entry name" value="IHF_alpha"/>
</dbReference>
<dbReference type="NCBIfam" id="TIGR00987">
    <property type="entry name" value="himA"/>
    <property type="match status" value="1"/>
</dbReference>
<dbReference type="NCBIfam" id="NF001401">
    <property type="entry name" value="PRK00285.1"/>
    <property type="match status" value="1"/>
</dbReference>
<dbReference type="PANTHER" id="PTHR33175">
    <property type="entry name" value="DNA-BINDING PROTEIN HU"/>
    <property type="match status" value="1"/>
</dbReference>
<dbReference type="PANTHER" id="PTHR33175:SF2">
    <property type="entry name" value="INTEGRATION HOST FACTOR SUBUNIT ALPHA"/>
    <property type="match status" value="1"/>
</dbReference>
<dbReference type="Pfam" id="PF00216">
    <property type="entry name" value="Bac_DNA_binding"/>
    <property type="match status" value="1"/>
</dbReference>
<dbReference type="PRINTS" id="PR01727">
    <property type="entry name" value="DNABINDINGHU"/>
</dbReference>
<dbReference type="SMART" id="SM00411">
    <property type="entry name" value="BHL"/>
    <property type="match status" value="1"/>
</dbReference>
<dbReference type="SUPFAM" id="SSF47729">
    <property type="entry name" value="IHF-like DNA-binding proteins"/>
    <property type="match status" value="1"/>
</dbReference>
<dbReference type="PROSITE" id="PS00045">
    <property type="entry name" value="HISTONE_LIKE"/>
    <property type="match status" value="1"/>
</dbReference>
<sequence>MALTKADIAEHLFTQLGMSKREAKDMVEAFFEEIRQALERGEQVKISGFGNFDLREKNQRPGRNPKTGEDIPISARRVVTFRPGQKLKARVENVEPNE</sequence>
<gene>
    <name evidence="1" type="primary">ihfA</name>
    <name evidence="1" type="synonym">himA</name>
    <name type="ordered locus">AHA_2321</name>
</gene>
<name>IHFA_AERHH</name>
<feature type="chain" id="PRO_1000060531" description="Integration host factor subunit alpha">
    <location>
        <begin position="1"/>
        <end position="98"/>
    </location>
</feature>
<feature type="region of interest" description="Disordered" evidence="2">
    <location>
        <begin position="52"/>
        <end position="73"/>
    </location>
</feature>
<organism>
    <name type="scientific">Aeromonas hydrophila subsp. hydrophila (strain ATCC 7966 / DSM 30187 / BCRC 13018 / CCUG 14551 / JCM 1027 / KCTC 2358 / NCIMB 9240 / NCTC 8049)</name>
    <dbReference type="NCBI Taxonomy" id="380703"/>
    <lineage>
        <taxon>Bacteria</taxon>
        <taxon>Pseudomonadati</taxon>
        <taxon>Pseudomonadota</taxon>
        <taxon>Gammaproteobacteria</taxon>
        <taxon>Aeromonadales</taxon>
        <taxon>Aeromonadaceae</taxon>
        <taxon>Aeromonas</taxon>
    </lineage>
</organism>
<proteinExistence type="inferred from homology"/>
<keyword id="KW-0233">DNA recombination</keyword>
<keyword id="KW-0238">DNA-binding</keyword>
<keyword id="KW-1185">Reference proteome</keyword>
<keyword id="KW-0804">Transcription</keyword>
<keyword id="KW-0805">Transcription regulation</keyword>
<keyword id="KW-0810">Translation regulation</keyword>
<protein>
    <recommendedName>
        <fullName evidence="1">Integration host factor subunit alpha</fullName>
        <shortName evidence="1">IHF-alpha</shortName>
    </recommendedName>
</protein>
<reference key="1">
    <citation type="journal article" date="2006" name="J. Bacteriol.">
        <title>Genome sequence of Aeromonas hydrophila ATCC 7966T: jack of all trades.</title>
        <authorList>
            <person name="Seshadri R."/>
            <person name="Joseph S.W."/>
            <person name="Chopra A.K."/>
            <person name="Sha J."/>
            <person name="Shaw J."/>
            <person name="Graf J."/>
            <person name="Haft D.H."/>
            <person name="Wu M."/>
            <person name="Ren Q."/>
            <person name="Rosovitz M.J."/>
            <person name="Madupu R."/>
            <person name="Tallon L."/>
            <person name="Kim M."/>
            <person name="Jin S."/>
            <person name="Vuong H."/>
            <person name="Stine O.C."/>
            <person name="Ali A."/>
            <person name="Horneman A.J."/>
            <person name="Heidelberg J.F."/>
        </authorList>
    </citation>
    <scope>NUCLEOTIDE SEQUENCE [LARGE SCALE GENOMIC DNA]</scope>
    <source>
        <strain>ATCC 7966 / DSM 30187 / BCRC 13018 / CCUG 14551 / JCM 1027 / KCTC 2358 / NCIMB 9240 / NCTC 8049</strain>
    </source>
</reference>
<comment type="function">
    <text evidence="1">This protein is one of the two subunits of integration host factor, a specific DNA-binding protein that functions in genetic recombination as well as in transcriptional and translational control.</text>
</comment>
<comment type="subunit">
    <text evidence="1">Heterodimer of an alpha and a beta chain.</text>
</comment>
<comment type="similarity">
    <text evidence="1">Belongs to the bacterial histone-like protein family.</text>
</comment>